<evidence type="ECO:0000250" key="1"/>
<evidence type="ECO:0000255" key="2">
    <source>
        <dbReference type="PROSITE-ProRule" id="PRU00192"/>
    </source>
</evidence>
<evidence type="ECO:0000255" key="3">
    <source>
        <dbReference type="PROSITE-ProRule" id="PRU00485"/>
    </source>
</evidence>
<organism>
    <name type="scientific">Xenopus tropicalis</name>
    <name type="common">Western clawed frog</name>
    <name type="synonym">Silurana tropicalis</name>
    <dbReference type="NCBI Taxonomy" id="8364"/>
    <lineage>
        <taxon>Eukaryota</taxon>
        <taxon>Metazoa</taxon>
        <taxon>Chordata</taxon>
        <taxon>Craniata</taxon>
        <taxon>Vertebrata</taxon>
        <taxon>Euteleostomi</taxon>
        <taxon>Amphibia</taxon>
        <taxon>Batrachia</taxon>
        <taxon>Anura</taxon>
        <taxon>Pipoidea</taxon>
        <taxon>Pipidae</taxon>
        <taxon>Xenopodinae</taxon>
        <taxon>Xenopus</taxon>
        <taxon>Silurana</taxon>
    </lineage>
</organism>
<feature type="chain" id="PRO_0000274581" description="SH3 domain-binding protein 4">
    <location>
        <begin position="1"/>
        <end position="957"/>
    </location>
</feature>
<feature type="domain" description="SH3 1" evidence="2">
    <location>
        <begin position="54"/>
        <end position="113"/>
    </location>
</feature>
<feature type="domain" description="ZU5" evidence="3">
    <location>
        <begin position="312"/>
        <end position="449"/>
    </location>
</feature>
<feature type="domain" description="SH3 2" evidence="2">
    <location>
        <begin position="649"/>
        <end position="719"/>
    </location>
</feature>
<sequence length="957" mass="106584">MAAQKIRSANTNGLPRCKSEGALIDFSGVPDPNLSDVKVLSPSSLRVDNPASLDNVKEVVAIKDYCPNNFTTLKFSKGEHLYVLDTSGGEWWYAHNTTEMGYIPSSYVQPLNYRDSCLSDSGMIDGLLESVDEGVKELDLLGDWTETISQDPIKKCHNNPFLRPSVSNPFLNGPLMPQIHALETGNSVDLLLFDPLAPSHAFSSETSTDVLLDLLPNNTQNEVAVPVKRDNPFFRSKRSYSLSELSVLQAKSENPTTGSFFAGLKSPAPEQFQSREDFRTAWLNHRKLARSCHDLDLLGQNPGWGQTQPVETSIVCRLDSSGGAVQLPDTNISIHVPEKHVASGETQQISLKALLDPPLELNNDKCTTVSPVLEIKLSNMDVQSPLTLELRISVALGGNASALNMVGIKCLRSDAKEGPYNPVTQIYIYGDTVQVKLDNLEPVMYVVMVAQGQGIVSPSSVWEYINKKVTVGLYGPKHIHPSFKAVLAIFGHDCAPKTLLVNEVGQQANNSAPVTLQLWGKQQFVLPKPQDLQLCLFSNMTNYRVDAGDQGKMVRGFQLKLGKVSRLIFPIICQEPAQLSDFTLRVQVRDEVGGVLSQYCVQTPRPPPKTGNKSTGPRRFLKKKEVGKIVLSPLAVTCKYPTFQDRPVTSLKYGKLLKTVVRQSKNPYLLEYKKGDVIGLLSEEKIRLKGQLWNKEWYIGYYQGKLGLVHAKNVLVVGKVKPSFFSGPELTTGLLLEQMLRPCKFLTYIYASVRTLLMENIGSWRCFADALGYGNLPLSYFCRVELESETERVASVLEKLKEECNSEGKEKKSFQKELIMALLKIDCQGLVVRLIQDFVLLTTAVEVASRWRELAEKLARVSKQQMDGYEAPHRDRNGALDSEAMWKPAYDFLLTWSAQIGESYRDVIQELHTGLDKMRSPITKRWKHLTGTLILVNSLDILRAAAFSTQEPEDCII</sequence>
<protein>
    <recommendedName>
        <fullName>SH3 domain-binding protein 4</fullName>
    </recommendedName>
</protein>
<dbReference type="EMBL" id="BC086304">
    <property type="protein sequence ID" value="AAH86304.1"/>
    <property type="molecule type" value="mRNA"/>
</dbReference>
<dbReference type="RefSeq" id="NP_001011179.1">
    <property type="nucleotide sequence ID" value="NM_001011179.1"/>
</dbReference>
<dbReference type="SMR" id="Q5U228"/>
<dbReference type="FunCoup" id="Q5U228">
    <property type="interactions" value="639"/>
</dbReference>
<dbReference type="STRING" id="8364.ENSXETP00000051309"/>
<dbReference type="PaxDb" id="8364-ENSXETP00000023846"/>
<dbReference type="DNASU" id="496599"/>
<dbReference type="GeneID" id="496599"/>
<dbReference type="KEGG" id="xtr:496599"/>
<dbReference type="AGR" id="Xenbase:XB-GENE-970857"/>
<dbReference type="CTD" id="23677"/>
<dbReference type="Xenbase" id="XB-GENE-970857">
    <property type="gene designation" value="sh3bp4"/>
</dbReference>
<dbReference type="eggNOG" id="ENOG502QTUW">
    <property type="taxonomic scope" value="Eukaryota"/>
</dbReference>
<dbReference type="HOGENOM" id="CLU_013080_2_0_1"/>
<dbReference type="InParanoid" id="Q5U228"/>
<dbReference type="OMA" id="RQNKSHY"/>
<dbReference type="OrthoDB" id="10000126at2759"/>
<dbReference type="PhylomeDB" id="Q5U228"/>
<dbReference type="TreeFam" id="TF105572"/>
<dbReference type="Reactome" id="R-XTR-9639288">
    <property type="pathway name" value="Amino acids regulate mTORC1"/>
</dbReference>
<dbReference type="Proteomes" id="UP000008143">
    <property type="component" value="Chromosome 9"/>
</dbReference>
<dbReference type="GO" id="GO:0005905">
    <property type="term" value="C:clathrin-coated pit"/>
    <property type="evidence" value="ECO:0007669"/>
    <property type="project" value="UniProtKB-SubCell"/>
</dbReference>
<dbReference type="GO" id="GO:0030136">
    <property type="term" value="C:clathrin-coated vesicle"/>
    <property type="evidence" value="ECO:0007669"/>
    <property type="project" value="UniProtKB-SubCell"/>
</dbReference>
<dbReference type="GO" id="GO:0005737">
    <property type="term" value="C:cytoplasm"/>
    <property type="evidence" value="ECO:0000250"/>
    <property type="project" value="UniProtKB"/>
</dbReference>
<dbReference type="GO" id="GO:0005634">
    <property type="term" value="C:nucleus"/>
    <property type="evidence" value="ECO:0007669"/>
    <property type="project" value="UniProtKB-SubCell"/>
</dbReference>
<dbReference type="GO" id="GO:0005092">
    <property type="term" value="F:GDP-dissociation inhibitor activity"/>
    <property type="evidence" value="ECO:0000250"/>
    <property type="project" value="UniProtKB"/>
</dbReference>
<dbReference type="GO" id="GO:0071230">
    <property type="term" value="P:cellular response to amino acid stimulus"/>
    <property type="evidence" value="ECO:0000250"/>
    <property type="project" value="UniProtKB"/>
</dbReference>
<dbReference type="GO" id="GO:0006897">
    <property type="term" value="P:endocytosis"/>
    <property type="evidence" value="ECO:0007669"/>
    <property type="project" value="UniProtKB-KW"/>
</dbReference>
<dbReference type="GO" id="GO:0030308">
    <property type="term" value="P:negative regulation of cell growth"/>
    <property type="evidence" value="ECO:0000250"/>
    <property type="project" value="UniProtKB"/>
</dbReference>
<dbReference type="GO" id="GO:0008285">
    <property type="term" value="P:negative regulation of cell population proliferation"/>
    <property type="evidence" value="ECO:0000250"/>
    <property type="project" value="UniProtKB"/>
</dbReference>
<dbReference type="GO" id="GO:0034260">
    <property type="term" value="P:negative regulation of GTPase activity"/>
    <property type="evidence" value="ECO:0000250"/>
    <property type="project" value="UniProtKB"/>
</dbReference>
<dbReference type="GO" id="GO:0032007">
    <property type="term" value="P:negative regulation of TOR signaling"/>
    <property type="evidence" value="ECO:0000250"/>
    <property type="project" value="UniProtKB"/>
</dbReference>
<dbReference type="GO" id="GO:0010508">
    <property type="term" value="P:positive regulation of autophagy"/>
    <property type="evidence" value="ECO:0000250"/>
    <property type="project" value="UniProtKB"/>
</dbReference>
<dbReference type="GO" id="GO:0061462">
    <property type="term" value="P:protein localization to lysosome"/>
    <property type="evidence" value="ECO:0000250"/>
    <property type="project" value="UniProtKB"/>
</dbReference>
<dbReference type="GO" id="GO:0050790">
    <property type="term" value="P:regulation of catalytic activity"/>
    <property type="evidence" value="ECO:0000250"/>
    <property type="project" value="UniProtKB"/>
</dbReference>
<dbReference type="CDD" id="cd11757">
    <property type="entry name" value="SH3_SH3BP4"/>
    <property type="match status" value="1"/>
</dbReference>
<dbReference type="FunFam" id="2.30.30.40:FF:000117">
    <property type="entry name" value="SH3 domain-binding protein 4"/>
    <property type="match status" value="1"/>
</dbReference>
<dbReference type="FunFam" id="2.60.220.30:FF:000008">
    <property type="entry name" value="SH3 domain-binding protein 4"/>
    <property type="match status" value="1"/>
</dbReference>
<dbReference type="Gene3D" id="2.60.220.30">
    <property type="match status" value="1"/>
</dbReference>
<dbReference type="Gene3D" id="2.30.30.40">
    <property type="entry name" value="SH3 Domains"/>
    <property type="match status" value="1"/>
</dbReference>
<dbReference type="InterPro" id="IPR056183">
    <property type="entry name" value="DEATH_SH3BP4"/>
</dbReference>
<dbReference type="InterPro" id="IPR036028">
    <property type="entry name" value="SH3-like_dom_sf"/>
</dbReference>
<dbReference type="InterPro" id="IPR001452">
    <property type="entry name" value="SH3_domain"/>
</dbReference>
<dbReference type="InterPro" id="IPR056181">
    <property type="entry name" value="SH3BP4_C"/>
</dbReference>
<dbReference type="InterPro" id="IPR035456">
    <property type="entry name" value="SH3BP4_SH3"/>
</dbReference>
<dbReference type="InterPro" id="IPR056182">
    <property type="entry name" value="UPA_SH3BP4"/>
</dbReference>
<dbReference type="InterPro" id="IPR000906">
    <property type="entry name" value="ZU5_dom"/>
</dbReference>
<dbReference type="PANTHER" id="PTHR15603:SF3">
    <property type="entry name" value="SH3 DOMAIN-BINDING PROTEIN 4"/>
    <property type="match status" value="1"/>
</dbReference>
<dbReference type="PANTHER" id="PTHR15603">
    <property type="entry name" value="SH3 DOMAIN-CONTAINING PROTEIN"/>
    <property type="match status" value="1"/>
</dbReference>
<dbReference type="Pfam" id="PF24094">
    <property type="entry name" value="DEATH_SH3BP4"/>
    <property type="match status" value="1"/>
</dbReference>
<dbReference type="Pfam" id="PF00018">
    <property type="entry name" value="SH3_1"/>
    <property type="match status" value="1"/>
</dbReference>
<dbReference type="Pfam" id="PF07653">
    <property type="entry name" value="SH3_2"/>
    <property type="match status" value="1"/>
</dbReference>
<dbReference type="Pfam" id="PF23637">
    <property type="entry name" value="SH3BP4_C"/>
    <property type="match status" value="1"/>
</dbReference>
<dbReference type="Pfam" id="PF23640">
    <property type="entry name" value="UPA_SH3BP4"/>
    <property type="match status" value="1"/>
</dbReference>
<dbReference type="Pfam" id="PF00791">
    <property type="entry name" value="ZU5"/>
    <property type="match status" value="1"/>
</dbReference>
<dbReference type="SMART" id="SM00326">
    <property type="entry name" value="SH3"/>
    <property type="match status" value="2"/>
</dbReference>
<dbReference type="SUPFAM" id="SSF50044">
    <property type="entry name" value="SH3-domain"/>
    <property type="match status" value="1"/>
</dbReference>
<dbReference type="PROSITE" id="PS50002">
    <property type="entry name" value="SH3"/>
    <property type="match status" value="2"/>
</dbReference>
<dbReference type="PROSITE" id="PS51145">
    <property type="entry name" value="ZU5"/>
    <property type="match status" value="1"/>
</dbReference>
<proteinExistence type="evidence at transcript level"/>
<reference key="1">
    <citation type="submission" date="2004-11" db="EMBL/GenBank/DDBJ databases">
        <authorList>
            <consortium name="NIH - Xenopus Gene Collection (XGC) project"/>
        </authorList>
    </citation>
    <scope>NUCLEOTIDE SEQUENCE [LARGE SCALE MRNA]</scope>
    <source>
        <tissue>Embryo</tissue>
    </source>
</reference>
<keyword id="KW-0168">Coated pit</keyword>
<keyword id="KW-0968">Cytoplasmic vesicle</keyword>
<keyword id="KW-0254">Endocytosis</keyword>
<keyword id="KW-0472">Membrane</keyword>
<keyword id="KW-0539">Nucleus</keyword>
<keyword id="KW-1185">Reference proteome</keyword>
<keyword id="KW-0677">Repeat</keyword>
<keyword id="KW-0728">SH3 domain</keyword>
<comment type="function">
    <text evidence="1">Possible role in regulating endocytosis of the transferrin receptor at the plasma membrane. Alternatively, may function as a negative regulator of the amino acid-induced TOR signaling by inhibiting the formation of active Rag GTPase complexes. Preferentially binds inactive Rag GTPase complexes and prevents their interaction with the mTORC1 complex inhibiting its relocalization to lysosomes and its activation. Thereby, may indirectly regulate cell growth, proliferation and autophagy (By similarity).</text>
</comment>
<comment type="subunit">
    <text evidence="1">Homodimer or homooligomer.</text>
</comment>
<comment type="subcellular location">
    <subcellularLocation>
        <location evidence="1">Membrane</location>
        <location evidence="1">Clathrin-coated pit</location>
    </subcellularLocation>
    <subcellularLocation>
        <location evidence="1">Cytoplasmic vesicle</location>
        <location evidence="1">Clathrin-coated vesicle</location>
    </subcellularLocation>
    <subcellularLocation>
        <location evidence="1">Nucleus</location>
    </subcellularLocation>
    <text evidence="1">Specifically associated with transferrin receptor-containing clathrin-coated pits and clathrin-coated vesicles. May also localize to the nucleus (By similarity).</text>
</comment>
<comment type="domain">
    <text evidence="1">The SH3 domain mediates localization to the clathrin-coated pits and vesicles.</text>
</comment>
<name>SH3B4_XENTR</name>
<accession>Q5U228</accession>
<gene>
    <name type="primary">sh3bp4</name>
</gene>